<keyword id="KW-0002">3D-structure</keyword>
<keyword id="KW-0007">Acetylation</keyword>
<keyword id="KW-0963">Cytoplasm</keyword>
<keyword id="KW-0903">Direct protein sequencing</keyword>
<keyword id="KW-1017">Isopeptide bond</keyword>
<keyword id="KW-0449">Lipoprotein</keyword>
<keyword id="KW-0472">Membrane</keyword>
<keyword id="KW-0519">Myristate</keyword>
<keyword id="KW-0539">Nucleus</keyword>
<keyword id="KW-0597">Phosphoprotein</keyword>
<keyword id="KW-1267">Proteomics identification</keyword>
<keyword id="KW-1185">Reference proteome</keyword>
<keyword id="KW-0687">Ribonucleoprotein</keyword>
<keyword id="KW-0689">Ribosomal protein</keyword>
<keyword id="KW-0832">Ubl conjugation</keyword>
<name>RS8_HUMAN</name>
<accession>P62241</accession>
<accession>P09058</accession>
<accession>Q6IRL7</accession>
<feature type="initiator methionine" description="Removed" evidence="5 7">
    <location>
        <position position="1"/>
    </location>
</feature>
<feature type="chain" id="PRO_0000122240" description="Small ribosomal subunit protein eS8">
    <location>
        <begin position="2"/>
        <end position="208"/>
    </location>
</feature>
<feature type="region of interest" description="Disordered" evidence="2">
    <location>
        <begin position="1"/>
        <end position="27"/>
    </location>
</feature>
<feature type="compositionally biased region" description="Basic residues" evidence="2">
    <location>
        <begin position="8"/>
        <end position="26"/>
    </location>
</feature>
<feature type="modified residue" description="N6-acetyllysine" evidence="1">
    <location>
        <position position="37"/>
    </location>
</feature>
<feature type="modified residue" description="N6-acetyllysine" evidence="1">
    <location>
        <position position="128"/>
    </location>
</feature>
<feature type="modified residue" description="Phosphothreonine" evidence="15">
    <location>
        <position position="130"/>
    </location>
</feature>
<feature type="modified residue" description="Phosphoserine" evidence="15">
    <location>
        <position position="160"/>
    </location>
</feature>
<feature type="lipid moiety-binding region" description="N-myristoyl glycine" evidence="5">
    <location>
        <position position="2"/>
    </location>
</feature>
<feature type="cross-link" description="Glycyl lysine isopeptide (Lys-Gly) (interchain with G-Cter in SUMO2)" evidence="16">
    <location>
        <position position="170"/>
    </location>
</feature>
<feature type="cross-link" description="Glycyl lysine isopeptide (Lys-Gly) (interchain with G-Cter in SUMO2)" evidence="16">
    <location>
        <position position="193"/>
    </location>
</feature>
<feature type="sequence variant" id="VAR_051861" description="In dbSNP:rs11537870.">
    <original>R</original>
    <variation>G</variation>
    <location>
        <position position="110"/>
    </location>
</feature>
<feature type="strand" evidence="18">
    <location>
        <begin position="7"/>
        <end position="10"/>
    </location>
</feature>
<feature type="strand" evidence="17">
    <location>
        <begin position="13"/>
        <end position="15"/>
    </location>
</feature>
<feature type="helix" evidence="19">
    <location>
        <begin position="26"/>
        <end position="28"/>
    </location>
</feature>
<feature type="strand" evidence="19">
    <location>
        <begin position="36"/>
        <end position="40"/>
    </location>
</feature>
<feature type="strand" evidence="19">
    <location>
        <begin position="42"/>
        <end position="47"/>
    </location>
</feature>
<feature type="helix" evidence="19">
    <location>
        <begin position="49"/>
        <end position="51"/>
    </location>
</feature>
<feature type="strand" evidence="19">
    <location>
        <begin position="53"/>
        <end position="60"/>
    </location>
</feature>
<feature type="strand" evidence="19">
    <location>
        <begin position="62"/>
        <end position="66"/>
    </location>
</feature>
<feature type="strand" evidence="19">
    <location>
        <begin position="68"/>
        <end position="70"/>
    </location>
</feature>
<feature type="strand" evidence="19">
    <location>
        <begin position="73"/>
        <end position="83"/>
    </location>
</feature>
<feature type="helix" evidence="19">
    <location>
        <begin position="89"/>
        <end position="92"/>
    </location>
</feature>
<feature type="strand" evidence="19">
    <location>
        <begin position="101"/>
        <end position="105"/>
    </location>
</feature>
<feature type="helix" evidence="19">
    <location>
        <begin position="107"/>
        <end position="117"/>
    </location>
</feature>
<feature type="strand" evidence="19">
    <location>
        <begin position="124"/>
        <end position="127"/>
    </location>
</feature>
<feature type="helix" evidence="19">
    <location>
        <begin position="131"/>
        <end position="137"/>
    </location>
</feature>
<feature type="helix" evidence="19">
    <location>
        <begin position="143"/>
        <end position="152"/>
    </location>
</feature>
<feature type="helix" evidence="19">
    <location>
        <begin position="153"/>
        <end position="155"/>
    </location>
</feature>
<feature type="helix" evidence="19">
    <location>
        <begin position="160"/>
        <end position="168"/>
    </location>
</feature>
<feature type="strand" evidence="19">
    <location>
        <begin position="170"/>
        <end position="175"/>
    </location>
</feature>
<feature type="helix" evidence="19">
    <location>
        <begin position="179"/>
        <end position="182"/>
    </location>
</feature>
<feature type="strand" evidence="19">
    <location>
        <begin position="187"/>
        <end position="189"/>
    </location>
</feature>
<feature type="helix" evidence="19">
    <location>
        <begin position="192"/>
        <end position="205"/>
    </location>
</feature>
<comment type="function">
    <text evidence="4 6">Component of the small ribosomal subunit (PubMed:23636399). The ribosome is a large ribonucleoprotein complex responsible for the synthesis of proteins in the cell (PubMed:23636399). Part of the small subunit (SSU) processome, first precursor of the small eukaryotic ribosomal subunit. During the assembly of the SSU processome in the nucleolus, many ribosome biogenesis factors, an RNA chaperone and ribosomal proteins associate with the nascent pre-rRNA and work in concert to generate RNA folding, modifications, rearrangements and cleavage as well as targeted degradation of pre-ribosomal RNA by the RNA exosome (PubMed:34516797).</text>
</comment>
<comment type="subunit">
    <text evidence="3 4 6">Component of the small ribosomal subunit (PubMed:23636399). Identified in a IGF2BP1-dependent mRNP granule complex containing untranslated mRNAs (PubMed:17289661). Part of the small subunit (SSU) processome, composed of more than 70 proteins and the RNA chaperone small nucleolar RNA (snoRNA) U3 (PubMed:34516797).</text>
</comment>
<comment type="interaction">
    <interactant intactId="EBI-351811">
        <id>P62241</id>
    </interactant>
    <interactant intactId="EBI-80426">
        <id>Q15700</id>
        <label>DLG2</label>
    </interactant>
    <organismsDiffer>false</organismsDiffer>
    <experiments>3</experiments>
</comment>
<comment type="interaction">
    <interactant intactId="EBI-351811">
        <id>P62241</id>
    </interactant>
    <interactant intactId="EBI-80440">
        <id>Q92796</id>
        <label>DLG3</label>
    </interactant>
    <organismsDiffer>false</organismsDiffer>
    <experiments>3</experiments>
</comment>
<comment type="interaction">
    <interactant intactId="EBI-351811">
        <id>P62241</id>
    </interactant>
    <interactant intactId="EBI-1047710">
        <id>P62280</id>
        <label>RPS11</label>
    </interactant>
    <organismsDiffer>false</organismsDiffer>
    <experiments>2</experiments>
</comment>
<comment type="subcellular location">
    <subcellularLocation>
        <location evidence="3 4">Cytoplasm</location>
    </subcellularLocation>
    <subcellularLocation>
        <location evidence="10">Membrane</location>
        <topology evidence="10">Lipid-anchor</topology>
    </subcellularLocation>
    <subcellularLocation>
        <location evidence="6">Nucleus</location>
        <location evidence="6">Nucleolus</location>
    </subcellularLocation>
    <text evidence="3">Localized in cytoplasmic mRNP granules containing untranslated mRNAs.</text>
</comment>
<comment type="similarity">
    <text evidence="9">Belongs to the eukaryotic ribosomal protein eS8 family.</text>
</comment>
<evidence type="ECO:0000250" key="1">
    <source>
        <dbReference type="UniProtKB" id="P62242"/>
    </source>
</evidence>
<evidence type="ECO:0000256" key="2">
    <source>
        <dbReference type="SAM" id="MobiDB-lite"/>
    </source>
</evidence>
<evidence type="ECO:0000269" key="3">
    <source>
    </source>
</evidence>
<evidence type="ECO:0000269" key="4">
    <source>
    </source>
</evidence>
<evidence type="ECO:0000269" key="5">
    <source>
    </source>
</evidence>
<evidence type="ECO:0000269" key="6">
    <source>
    </source>
</evidence>
<evidence type="ECO:0000269" key="7">
    <source>
    </source>
</evidence>
<evidence type="ECO:0000303" key="8">
    <source>
    </source>
</evidence>
<evidence type="ECO:0000305" key="9"/>
<evidence type="ECO:0000305" key="10">
    <source>
    </source>
</evidence>
<evidence type="ECO:0000312" key="11">
    <source>
        <dbReference type="HGNC" id="HGNC:10441"/>
    </source>
</evidence>
<evidence type="ECO:0007744" key="12">
    <source>
        <dbReference type="PDB" id="7MQ8"/>
    </source>
</evidence>
<evidence type="ECO:0007744" key="13">
    <source>
        <dbReference type="PDB" id="7MQ9"/>
    </source>
</evidence>
<evidence type="ECO:0007744" key="14">
    <source>
        <dbReference type="PDB" id="7MQA"/>
    </source>
</evidence>
<evidence type="ECO:0007744" key="15">
    <source>
    </source>
</evidence>
<evidence type="ECO:0007744" key="16">
    <source>
    </source>
</evidence>
<evidence type="ECO:0007829" key="17">
    <source>
        <dbReference type="PDB" id="6ZMT"/>
    </source>
</evidence>
<evidence type="ECO:0007829" key="18">
    <source>
        <dbReference type="PDB" id="6ZXG"/>
    </source>
</evidence>
<evidence type="ECO:0007829" key="19">
    <source>
        <dbReference type="PDB" id="7R4X"/>
    </source>
</evidence>
<sequence length="208" mass="24205">MGISRDNWHKRRKTGGKRKPYHKKRKYELGRPAANTKIGPRRIHTVRVRGGNKKYRALRLDVGNFSWGSECCTRKTRIIDVVYNASNNELVRTKTLVKNCIVLIDSTPYRQWYESHYALPLGRKKGAKLTPEEEEILNKKRSKKIQKKYDERKKNAKISSLLEEQFQQGKLLACIASRPGQCGRADGYVLEGKELEFYLRKIKARKGK</sequence>
<reference key="1">
    <citation type="journal article" date="1993" name="Genomics">
        <title>The structure of the human intron-containing S8 ribosomal protein gene and determination of its chromosomal location at 1p32-p34.1.</title>
        <authorList>
            <person name="Davies B."/>
            <person name="Fried M."/>
        </authorList>
    </citation>
    <scope>NUCLEOTIDE SEQUENCE [GENOMIC DNA]</scope>
</reference>
<reference key="2">
    <citation type="submission" date="2001-05" db="EMBL/GenBank/DDBJ databases">
        <title>Identification of immuno-peptidmics that are recognized by tumor-reactive CTL generated from TIL of colon cancer patients.</title>
        <authorList>
            <person name="Shichijo S."/>
            <person name="Itoh K."/>
        </authorList>
    </citation>
    <scope>NUCLEOTIDE SEQUENCE [LARGE SCALE MRNA]</scope>
    <source>
        <tissue>Colon adenocarcinoma</tissue>
    </source>
</reference>
<reference key="3">
    <citation type="journal article" date="2004" name="Genome Res.">
        <title>The status, quality, and expansion of the NIH full-length cDNA project: the Mammalian Gene Collection (MGC).</title>
        <authorList>
            <consortium name="The MGC Project Team"/>
        </authorList>
    </citation>
    <scope>NUCLEOTIDE SEQUENCE [LARGE SCALE MRNA]</scope>
    <source>
        <tissue>Uterus</tissue>
    </source>
</reference>
<reference key="4">
    <citation type="journal article" date="1996" name="Eur. J. Biochem.">
        <title>Characterization of the human small-ribosomal-subunit proteins by N-terminal and internal sequencing, and mass spectrometry.</title>
        <authorList>
            <person name="Vladimirov S.N."/>
            <person name="Ivanov A.V."/>
            <person name="Karpova G.G."/>
            <person name="Musolyamov A.K."/>
            <person name="Egorov T.A."/>
            <person name="Thiede B."/>
            <person name="Wittmann-Liebold B."/>
            <person name="Otto A."/>
        </authorList>
    </citation>
    <scope>PROTEIN SEQUENCE OF 2-17</scope>
    <scope>CLEAVAGE OF INITIATOR METHIONINE</scope>
    <source>
        <tissue>Placenta</tissue>
    </source>
</reference>
<reference key="5">
    <citation type="journal article" date="2003" name="Nature">
        <title>Proteomic characterization of the human centrosome by protein correlation profiling.</title>
        <authorList>
            <person name="Andersen J.S."/>
            <person name="Wilkinson C.J."/>
            <person name="Mayor T."/>
            <person name="Mortensen P."/>
            <person name="Nigg E.A."/>
            <person name="Mann M."/>
        </authorList>
    </citation>
    <scope>IDENTIFICATION BY MASS SPECTROMETRY</scope>
    <source>
        <tissue>Lymphoblast</tissue>
    </source>
</reference>
<reference key="6">
    <citation type="journal article" date="2007" name="Mol. Cell. Proteomics">
        <title>Molecular composition of IMP1 ribonucleoprotein granules.</title>
        <authorList>
            <person name="Joeson L."/>
            <person name="Vikesaa J."/>
            <person name="Krogh A."/>
            <person name="Nielsen L.K."/>
            <person name="Hansen T."/>
            <person name="Borup R."/>
            <person name="Johnsen A.H."/>
            <person name="Christiansen J."/>
            <person name="Nielsen F.C."/>
        </authorList>
    </citation>
    <scope>IDENTIFICATION IN A MRNP GRANULE COMPLEX</scope>
    <scope>IDENTIFICATION BY MASS SPECTROMETRY</scope>
    <scope>SUBCELLULAR LOCATION</scope>
</reference>
<reference key="7">
    <citation type="journal article" date="2008" name="Proc. Natl. Acad. Sci. U.S.A.">
        <title>A quantitative atlas of mitotic phosphorylation.</title>
        <authorList>
            <person name="Dephoure N."/>
            <person name="Zhou C."/>
            <person name="Villen J."/>
            <person name="Beausoleil S.A."/>
            <person name="Bakalarski C.E."/>
            <person name="Elledge S.J."/>
            <person name="Gygi S.P."/>
        </authorList>
    </citation>
    <scope>IDENTIFICATION BY MASS SPECTROMETRY [LARGE SCALE ANALYSIS]</scope>
    <source>
        <tissue>Cervix carcinoma</tissue>
    </source>
</reference>
<reference key="8">
    <citation type="journal article" date="2009" name="Anal. Chem.">
        <title>Lys-N and trypsin cover complementary parts of the phosphoproteome in a refined SCX-based approach.</title>
        <authorList>
            <person name="Gauci S."/>
            <person name="Helbig A.O."/>
            <person name="Slijper M."/>
            <person name="Krijgsveld J."/>
            <person name="Heck A.J."/>
            <person name="Mohammed S."/>
        </authorList>
    </citation>
    <scope>IDENTIFICATION BY MASS SPECTROMETRY [LARGE SCALE ANALYSIS]</scope>
</reference>
<reference key="9">
    <citation type="journal article" date="2009" name="Sci. Signal.">
        <title>Quantitative phosphoproteomic analysis of T cell receptor signaling reveals system-wide modulation of protein-protein interactions.</title>
        <authorList>
            <person name="Mayya V."/>
            <person name="Lundgren D.H."/>
            <person name="Hwang S.-I."/>
            <person name="Rezaul K."/>
            <person name="Wu L."/>
            <person name="Eng J.K."/>
            <person name="Rodionov V."/>
            <person name="Han D.K."/>
        </authorList>
    </citation>
    <scope>IDENTIFICATION BY MASS SPECTROMETRY [LARGE SCALE ANALYSIS]</scope>
    <source>
        <tissue>Leukemic T-cell</tissue>
    </source>
</reference>
<reference key="10">
    <citation type="journal article" date="2011" name="BMC Syst. Biol.">
        <title>Initial characterization of the human central proteome.</title>
        <authorList>
            <person name="Burkard T.R."/>
            <person name="Planyavsky M."/>
            <person name="Kaupe I."/>
            <person name="Breitwieser F.P."/>
            <person name="Buerckstuemmer T."/>
            <person name="Bennett K.L."/>
            <person name="Superti-Furga G."/>
            <person name="Colinge J."/>
        </authorList>
    </citation>
    <scope>IDENTIFICATION BY MASS SPECTROMETRY [LARGE SCALE ANALYSIS]</scope>
</reference>
<reference key="11">
    <citation type="journal article" date="2013" name="J. Proteome Res.">
        <title>Toward a comprehensive characterization of a human cancer cell phosphoproteome.</title>
        <authorList>
            <person name="Zhou H."/>
            <person name="Di Palma S."/>
            <person name="Preisinger C."/>
            <person name="Peng M."/>
            <person name="Polat A.N."/>
            <person name="Heck A.J."/>
            <person name="Mohammed S."/>
        </authorList>
    </citation>
    <scope>PHOSPHORYLATION [LARGE SCALE ANALYSIS] AT THR-130 AND SER-160</scope>
    <scope>IDENTIFICATION BY MASS SPECTROMETRY [LARGE SCALE ANALYSIS]</scope>
    <source>
        <tissue>Cervix carcinoma</tissue>
        <tissue>Erythroleukemia</tissue>
    </source>
</reference>
<reference key="12">
    <citation type="journal article" date="2014" name="Curr. Opin. Struct. Biol.">
        <title>A new system for naming ribosomal proteins.</title>
        <authorList>
            <person name="Ban N."/>
            <person name="Beckmann R."/>
            <person name="Cate J.H.D."/>
            <person name="Dinman J.D."/>
            <person name="Dragon F."/>
            <person name="Ellis S.R."/>
            <person name="Lafontaine D.L.J."/>
            <person name="Lindahl L."/>
            <person name="Liljas A."/>
            <person name="Lipton J.M."/>
            <person name="McAlear M.A."/>
            <person name="Moore P.B."/>
            <person name="Noller H.F."/>
            <person name="Ortega J."/>
            <person name="Panse V.G."/>
            <person name="Ramakrishnan V."/>
            <person name="Spahn C.M.T."/>
            <person name="Steitz T.A."/>
            <person name="Tchorzewski M."/>
            <person name="Tollervey D."/>
            <person name="Warren A.J."/>
            <person name="Williamson J.R."/>
            <person name="Wilson D."/>
            <person name="Yonath A."/>
            <person name="Yusupov M."/>
        </authorList>
    </citation>
    <scope>NOMENCLATURE</scope>
</reference>
<reference key="13">
    <citation type="journal article" date="2014" name="J. Proteomics">
        <title>An enzyme assisted RP-RPLC approach for in-depth analysis of human liver phosphoproteome.</title>
        <authorList>
            <person name="Bian Y."/>
            <person name="Song C."/>
            <person name="Cheng K."/>
            <person name="Dong M."/>
            <person name="Wang F."/>
            <person name="Huang J."/>
            <person name="Sun D."/>
            <person name="Wang L."/>
            <person name="Ye M."/>
            <person name="Zou H."/>
        </authorList>
    </citation>
    <scope>IDENTIFICATION BY MASS SPECTROMETRY [LARGE SCALE ANALYSIS]</scope>
    <source>
        <tissue>Liver</tissue>
    </source>
</reference>
<reference key="14">
    <citation type="journal article" date="2014" name="Nat. Commun.">
        <title>Global profiling of co- and post-translationally N-myristoylated proteomes in human cells.</title>
        <authorList>
            <person name="Thinon E."/>
            <person name="Serwa R.A."/>
            <person name="Broncel M."/>
            <person name="Brannigan J.A."/>
            <person name="Brassat U."/>
            <person name="Wright M.H."/>
            <person name="Heal W.P."/>
            <person name="Wilkinson A.J."/>
            <person name="Mann D.J."/>
            <person name="Tate E.W."/>
        </authorList>
    </citation>
    <scope>MYRISTOYLATION AT GLY-2</scope>
    <scope>CLEAVAGE OF INITIATOR METHIONINE</scope>
    <scope>IDENTIFICATION BY MASS SPECTROMETRY</scope>
</reference>
<reference key="15">
    <citation type="journal article" date="2015" name="Proteomics">
        <title>N-terminome analysis of the human mitochondrial proteome.</title>
        <authorList>
            <person name="Vaca Jacome A.S."/>
            <person name="Rabilloud T."/>
            <person name="Schaeffer-Reiss C."/>
            <person name="Rompais M."/>
            <person name="Ayoub D."/>
            <person name="Lane L."/>
            <person name="Bairoch A."/>
            <person name="Van Dorsselaer A."/>
            <person name="Carapito C."/>
        </authorList>
    </citation>
    <scope>IDENTIFICATION BY MASS SPECTROMETRY [LARGE SCALE ANALYSIS]</scope>
</reference>
<reference key="16">
    <citation type="journal article" date="2017" name="Nat. Struct. Mol. Biol.">
        <title>Site-specific mapping of the human SUMO proteome reveals co-modification with phosphorylation.</title>
        <authorList>
            <person name="Hendriks I.A."/>
            <person name="Lyon D."/>
            <person name="Young C."/>
            <person name="Jensen L.J."/>
            <person name="Vertegaal A.C."/>
            <person name="Nielsen M.L."/>
        </authorList>
    </citation>
    <scope>SUMOYLATION [LARGE SCALE ANALYSIS] AT LYS-170 AND LYS-193</scope>
    <scope>IDENTIFICATION BY MASS SPECTROMETRY [LARGE SCALE ANALYSIS]</scope>
</reference>
<reference key="17">
    <citation type="journal article" date="2013" name="Nature">
        <title>Structures of the human and Drosophila 80S ribosome.</title>
        <authorList>
            <person name="Anger A.M."/>
            <person name="Armache J.P."/>
            <person name="Berninghausen O."/>
            <person name="Habeck M."/>
            <person name="Subklewe M."/>
            <person name="Wilson D.N."/>
            <person name="Beckmann R."/>
        </authorList>
    </citation>
    <scope>STRUCTURE BY ELECTRON MICROSCOPY (5.0 ANGSTROMS) OF RIBOSOME</scope>
    <scope>FUNCTION</scope>
    <scope>SUBUNIT</scope>
    <scope>SUBCELLULAR LOCATION</scope>
</reference>
<reference evidence="12 13 14" key="18">
    <citation type="journal article" date="2021" name="Science">
        <title>Nucleolar maturation of the human small subunit processome.</title>
        <authorList>
            <person name="Singh S."/>
            <person name="Vanden Broeck A."/>
            <person name="Miller L."/>
            <person name="Chaker-Margot M."/>
            <person name="Klinge S."/>
        </authorList>
    </citation>
    <scope>STRUCTURE BY ELECTRON MICROSCOPY (2.70 ANGSTROMS)</scope>
    <scope>FUNCTION</scope>
    <scope>SUBUNIT</scope>
    <scope>SUBCELLULAR LOCATION</scope>
</reference>
<dbReference type="EMBL" id="X67247">
    <property type="protein sequence ID" value="CAA47670.1"/>
    <property type="molecule type" value="Genomic_DNA"/>
</dbReference>
<dbReference type="EMBL" id="AB062401">
    <property type="protein sequence ID" value="BAB93488.1"/>
    <property type="molecule type" value="mRNA"/>
</dbReference>
<dbReference type="EMBL" id="BC070875">
    <property type="protein sequence ID" value="AAH70875.1"/>
    <property type="molecule type" value="mRNA"/>
</dbReference>
<dbReference type="CCDS" id="CCDS513.1"/>
<dbReference type="PIR" id="S25022">
    <property type="entry name" value="S25022"/>
</dbReference>
<dbReference type="RefSeq" id="NP_001003.1">
    <property type="nucleotide sequence ID" value="NM_001012.2"/>
</dbReference>
<dbReference type="PDB" id="4UG0">
    <property type="method" value="EM"/>
    <property type="chains" value="SI=1-208"/>
</dbReference>
<dbReference type="PDB" id="4V6X">
    <property type="method" value="EM"/>
    <property type="resolution" value="5.00 A"/>
    <property type="chains" value="AI=1-208"/>
</dbReference>
<dbReference type="PDB" id="5A2Q">
    <property type="method" value="EM"/>
    <property type="resolution" value="3.90 A"/>
    <property type="chains" value="I=1-208"/>
</dbReference>
<dbReference type="PDB" id="5AJ0">
    <property type="method" value="EM"/>
    <property type="resolution" value="3.50 A"/>
    <property type="chains" value="BI=1-208"/>
</dbReference>
<dbReference type="PDB" id="5FLX">
    <property type="method" value="EM"/>
    <property type="resolution" value="3.90 A"/>
    <property type="chains" value="I=1-208"/>
</dbReference>
<dbReference type="PDB" id="5LKS">
    <property type="method" value="EM"/>
    <property type="resolution" value="3.60 A"/>
    <property type="chains" value="SI=1-208"/>
</dbReference>
<dbReference type="PDB" id="5OA3">
    <property type="method" value="EM"/>
    <property type="resolution" value="4.30 A"/>
    <property type="chains" value="I=1-208"/>
</dbReference>
<dbReference type="PDB" id="5T2C">
    <property type="method" value="EM"/>
    <property type="resolution" value="3.60 A"/>
    <property type="chains" value="Au=1-208"/>
</dbReference>
<dbReference type="PDB" id="5VYC">
    <property type="method" value="X-ray"/>
    <property type="resolution" value="6.00 A"/>
    <property type="chains" value="I1/I2/I3/I4/I5/I6=1-208"/>
</dbReference>
<dbReference type="PDB" id="6FEC">
    <property type="method" value="EM"/>
    <property type="resolution" value="6.30 A"/>
    <property type="chains" value="o=2-207"/>
</dbReference>
<dbReference type="PDB" id="6G18">
    <property type="method" value="EM"/>
    <property type="resolution" value="3.60 A"/>
    <property type="chains" value="I=1-208"/>
</dbReference>
<dbReference type="PDB" id="6G4S">
    <property type="method" value="EM"/>
    <property type="resolution" value="4.00 A"/>
    <property type="chains" value="I=1-208"/>
</dbReference>
<dbReference type="PDB" id="6G4W">
    <property type="method" value="EM"/>
    <property type="resolution" value="4.50 A"/>
    <property type="chains" value="I=1-208"/>
</dbReference>
<dbReference type="PDB" id="6G51">
    <property type="method" value="EM"/>
    <property type="resolution" value="4.10 A"/>
    <property type="chains" value="I=1-208"/>
</dbReference>
<dbReference type="PDB" id="6G53">
    <property type="method" value="EM"/>
    <property type="resolution" value="4.50 A"/>
    <property type="chains" value="I=1-208"/>
</dbReference>
<dbReference type="PDB" id="6G5H">
    <property type="method" value="EM"/>
    <property type="resolution" value="3.60 A"/>
    <property type="chains" value="I=1-208"/>
</dbReference>
<dbReference type="PDB" id="6G5I">
    <property type="method" value="EM"/>
    <property type="resolution" value="3.50 A"/>
    <property type="chains" value="I=1-208"/>
</dbReference>
<dbReference type="PDB" id="6IP5">
    <property type="method" value="EM"/>
    <property type="resolution" value="3.90 A"/>
    <property type="chains" value="2t=1-208"/>
</dbReference>
<dbReference type="PDB" id="6IP6">
    <property type="method" value="EM"/>
    <property type="resolution" value="4.50 A"/>
    <property type="chains" value="2t=1-208"/>
</dbReference>
<dbReference type="PDB" id="6IP8">
    <property type="method" value="EM"/>
    <property type="resolution" value="3.90 A"/>
    <property type="chains" value="2t=1-208"/>
</dbReference>
<dbReference type="PDB" id="6OLE">
    <property type="method" value="EM"/>
    <property type="resolution" value="3.10 A"/>
    <property type="chains" value="SI=2-205"/>
</dbReference>
<dbReference type="PDB" id="6OLF">
    <property type="method" value="EM"/>
    <property type="resolution" value="3.90 A"/>
    <property type="chains" value="SI=2-205"/>
</dbReference>
<dbReference type="PDB" id="6OLG">
    <property type="method" value="EM"/>
    <property type="resolution" value="3.40 A"/>
    <property type="chains" value="BI=2-208"/>
</dbReference>
<dbReference type="PDB" id="6OLI">
    <property type="method" value="EM"/>
    <property type="resolution" value="3.50 A"/>
    <property type="chains" value="SI=2-205"/>
</dbReference>
<dbReference type="PDB" id="6OLZ">
    <property type="method" value="EM"/>
    <property type="resolution" value="3.90 A"/>
    <property type="chains" value="BI=2-208"/>
</dbReference>
<dbReference type="PDB" id="6OM0">
    <property type="method" value="EM"/>
    <property type="resolution" value="3.10 A"/>
    <property type="chains" value="SI=2-205"/>
</dbReference>
<dbReference type="PDB" id="6OM7">
    <property type="method" value="EM"/>
    <property type="resolution" value="3.70 A"/>
    <property type="chains" value="SI=2-205"/>
</dbReference>
<dbReference type="PDB" id="6QZP">
    <property type="method" value="EM"/>
    <property type="resolution" value="2.90 A"/>
    <property type="chains" value="SI=2-207"/>
</dbReference>
<dbReference type="PDB" id="6XA1">
    <property type="method" value="EM"/>
    <property type="resolution" value="2.80 A"/>
    <property type="chains" value="SI=2-206"/>
</dbReference>
<dbReference type="PDB" id="6Y0G">
    <property type="method" value="EM"/>
    <property type="resolution" value="3.20 A"/>
    <property type="chains" value="SI=1-208"/>
</dbReference>
<dbReference type="PDB" id="6Y2L">
    <property type="method" value="EM"/>
    <property type="resolution" value="3.00 A"/>
    <property type="chains" value="SI=1-208"/>
</dbReference>
<dbReference type="PDB" id="6Y57">
    <property type="method" value="EM"/>
    <property type="resolution" value="3.50 A"/>
    <property type="chains" value="SI=1-208"/>
</dbReference>
<dbReference type="PDB" id="6YBW">
    <property type="method" value="EM"/>
    <property type="resolution" value="3.10 A"/>
    <property type="chains" value="R=1-208"/>
</dbReference>
<dbReference type="PDB" id="6Z6L">
    <property type="method" value="EM"/>
    <property type="resolution" value="3.00 A"/>
    <property type="chains" value="SI=1-208"/>
</dbReference>
<dbReference type="PDB" id="6Z6M">
    <property type="method" value="EM"/>
    <property type="resolution" value="3.10 A"/>
    <property type="chains" value="SI=1-208"/>
</dbReference>
<dbReference type="PDB" id="6Z6N">
    <property type="method" value="EM"/>
    <property type="resolution" value="2.90 A"/>
    <property type="chains" value="SI=1-208"/>
</dbReference>
<dbReference type="PDB" id="6ZLW">
    <property type="method" value="EM"/>
    <property type="resolution" value="2.60 A"/>
    <property type="chains" value="I=1-208"/>
</dbReference>
<dbReference type="PDB" id="6ZM7">
    <property type="method" value="EM"/>
    <property type="resolution" value="2.70 A"/>
    <property type="chains" value="SI=1-208"/>
</dbReference>
<dbReference type="PDB" id="6ZME">
    <property type="method" value="EM"/>
    <property type="resolution" value="3.00 A"/>
    <property type="chains" value="SI=1-208"/>
</dbReference>
<dbReference type="PDB" id="6ZMI">
    <property type="method" value="EM"/>
    <property type="resolution" value="2.60 A"/>
    <property type="chains" value="SI=1-208"/>
</dbReference>
<dbReference type="PDB" id="6ZMO">
    <property type="method" value="EM"/>
    <property type="resolution" value="3.10 A"/>
    <property type="chains" value="SI=1-208"/>
</dbReference>
<dbReference type="PDB" id="6ZMT">
    <property type="method" value="EM"/>
    <property type="resolution" value="3.00 A"/>
    <property type="chains" value="I=1-208"/>
</dbReference>
<dbReference type="PDB" id="6ZMW">
    <property type="method" value="EM"/>
    <property type="resolution" value="3.70 A"/>
    <property type="chains" value="R=1-208"/>
</dbReference>
<dbReference type="PDB" id="6ZN5">
    <property type="method" value="EM"/>
    <property type="resolution" value="3.20 A"/>
    <property type="chains" value="I=2-206"/>
</dbReference>
<dbReference type="PDB" id="6ZOJ">
    <property type="method" value="EM"/>
    <property type="resolution" value="2.80 A"/>
    <property type="chains" value="I=1-208"/>
</dbReference>
<dbReference type="PDB" id="6ZOK">
    <property type="method" value="EM"/>
    <property type="resolution" value="2.80 A"/>
    <property type="chains" value="I=1-208"/>
</dbReference>
<dbReference type="PDB" id="6ZON">
    <property type="method" value="EM"/>
    <property type="resolution" value="3.00 A"/>
    <property type="chains" value="t=1-208"/>
</dbReference>
<dbReference type="PDB" id="6ZP4">
    <property type="method" value="EM"/>
    <property type="resolution" value="2.90 A"/>
    <property type="chains" value="t=1-208"/>
</dbReference>
<dbReference type="PDB" id="6ZUO">
    <property type="method" value="EM"/>
    <property type="resolution" value="3.10 A"/>
    <property type="chains" value="I=1-208"/>
</dbReference>
<dbReference type="PDB" id="6ZV6">
    <property type="method" value="EM"/>
    <property type="resolution" value="2.90 A"/>
    <property type="chains" value="I=1-208"/>
</dbReference>
<dbReference type="PDB" id="6ZVH">
    <property type="method" value="EM"/>
    <property type="resolution" value="2.90 A"/>
    <property type="chains" value="I=2-207"/>
</dbReference>
<dbReference type="PDB" id="6ZVJ">
    <property type="method" value="EM"/>
    <property type="resolution" value="3.80 A"/>
    <property type="chains" value="t=2-206"/>
</dbReference>
<dbReference type="PDB" id="6ZXD">
    <property type="method" value="EM"/>
    <property type="resolution" value="3.20 A"/>
    <property type="chains" value="I=1-208"/>
</dbReference>
<dbReference type="PDB" id="6ZXE">
    <property type="method" value="EM"/>
    <property type="resolution" value="3.00 A"/>
    <property type="chains" value="I=1-208"/>
</dbReference>
<dbReference type="PDB" id="6ZXF">
    <property type="method" value="EM"/>
    <property type="resolution" value="3.70 A"/>
    <property type="chains" value="I=1-208"/>
</dbReference>
<dbReference type="PDB" id="6ZXG">
    <property type="method" value="EM"/>
    <property type="resolution" value="2.60 A"/>
    <property type="chains" value="I=1-208"/>
</dbReference>
<dbReference type="PDB" id="6ZXH">
    <property type="method" value="EM"/>
    <property type="resolution" value="2.70 A"/>
    <property type="chains" value="I=1-208"/>
</dbReference>
<dbReference type="PDB" id="7A09">
    <property type="method" value="EM"/>
    <property type="resolution" value="3.50 A"/>
    <property type="chains" value="t=1-208"/>
</dbReference>
<dbReference type="PDB" id="7K5I">
    <property type="method" value="EM"/>
    <property type="resolution" value="2.90 A"/>
    <property type="chains" value="I=1-208"/>
</dbReference>
<dbReference type="PDB" id="7MQ8">
    <property type="method" value="EM"/>
    <property type="resolution" value="3.60 A"/>
    <property type="chains" value="L8=1-208"/>
</dbReference>
<dbReference type="PDB" id="7MQ9">
    <property type="method" value="EM"/>
    <property type="resolution" value="3.87 A"/>
    <property type="chains" value="L8=1-208"/>
</dbReference>
<dbReference type="PDB" id="7MQA">
    <property type="method" value="EM"/>
    <property type="resolution" value="2.70 A"/>
    <property type="chains" value="L8=1-208"/>
</dbReference>
<dbReference type="PDB" id="7QP6">
    <property type="method" value="EM"/>
    <property type="resolution" value="4.70 A"/>
    <property type="chains" value="R=1-208"/>
</dbReference>
<dbReference type="PDB" id="7QP7">
    <property type="method" value="EM"/>
    <property type="resolution" value="3.70 A"/>
    <property type="chains" value="R=1-208"/>
</dbReference>
<dbReference type="PDB" id="7QVP">
    <property type="method" value="EM"/>
    <property type="resolution" value="3.00 A"/>
    <property type="chains" value="RI/SI=1-208"/>
</dbReference>
<dbReference type="PDB" id="7R4X">
    <property type="method" value="EM"/>
    <property type="resolution" value="2.15 A"/>
    <property type="chains" value="I=1-208"/>
</dbReference>
<dbReference type="PDB" id="7TQL">
    <property type="method" value="EM"/>
    <property type="resolution" value="3.40 A"/>
    <property type="chains" value="I=2-206"/>
</dbReference>
<dbReference type="PDB" id="7WTS">
    <property type="method" value="EM"/>
    <property type="resolution" value="3.20 A"/>
    <property type="chains" value="I=1-208"/>
</dbReference>
<dbReference type="PDB" id="7WTT">
    <property type="method" value="EM"/>
    <property type="resolution" value="3.10 A"/>
    <property type="chains" value="I=1-208"/>
</dbReference>
<dbReference type="PDB" id="7WTU">
    <property type="method" value="EM"/>
    <property type="resolution" value="3.00 A"/>
    <property type="chains" value="I=1-208"/>
</dbReference>
<dbReference type="PDB" id="7WTV">
    <property type="method" value="EM"/>
    <property type="resolution" value="3.50 A"/>
    <property type="chains" value="I=1-208"/>
</dbReference>
<dbReference type="PDB" id="7WTW">
    <property type="method" value="EM"/>
    <property type="resolution" value="3.20 A"/>
    <property type="chains" value="I=1-208"/>
</dbReference>
<dbReference type="PDB" id="7WTX">
    <property type="method" value="EM"/>
    <property type="resolution" value="3.10 A"/>
    <property type="chains" value="I=1-208"/>
</dbReference>
<dbReference type="PDB" id="7WTZ">
    <property type="method" value="EM"/>
    <property type="resolution" value="3.00 A"/>
    <property type="chains" value="I=1-208"/>
</dbReference>
<dbReference type="PDB" id="7WU0">
    <property type="method" value="EM"/>
    <property type="resolution" value="3.30 A"/>
    <property type="chains" value="I=1-208"/>
</dbReference>
<dbReference type="PDB" id="7XNX">
    <property type="method" value="EM"/>
    <property type="resolution" value="2.70 A"/>
    <property type="chains" value="SI=1-208"/>
</dbReference>
<dbReference type="PDB" id="7XNY">
    <property type="method" value="EM"/>
    <property type="resolution" value="2.50 A"/>
    <property type="chains" value="SI=1-208"/>
</dbReference>
<dbReference type="PDB" id="8G5Y">
    <property type="method" value="EM"/>
    <property type="resolution" value="2.29 A"/>
    <property type="chains" value="SI=1-208"/>
</dbReference>
<dbReference type="PDB" id="8G5Z">
    <property type="method" value="EM"/>
    <property type="resolution" value="2.64 A"/>
    <property type="chains" value="SI=2-207"/>
</dbReference>
<dbReference type="PDB" id="8G60">
    <property type="method" value="EM"/>
    <property type="resolution" value="2.54 A"/>
    <property type="chains" value="SI=1-208"/>
</dbReference>
<dbReference type="PDB" id="8G61">
    <property type="method" value="EM"/>
    <property type="resolution" value="2.94 A"/>
    <property type="chains" value="SI=1-208"/>
</dbReference>
<dbReference type="PDB" id="8G6J">
    <property type="method" value="EM"/>
    <property type="resolution" value="2.80 A"/>
    <property type="chains" value="SI=1-208"/>
</dbReference>
<dbReference type="PDB" id="8GLP">
    <property type="method" value="EM"/>
    <property type="resolution" value="1.67 A"/>
    <property type="chains" value="SI=1-208"/>
</dbReference>
<dbReference type="PDB" id="8IFD">
    <property type="method" value="EM"/>
    <property type="resolution" value="2.59 A"/>
    <property type="chains" value="2t=1-208"/>
</dbReference>
<dbReference type="PDB" id="8IFE">
    <property type="method" value="EM"/>
    <property type="resolution" value="2.57 A"/>
    <property type="chains" value="2t=1-208"/>
</dbReference>
<dbReference type="PDB" id="8JDJ">
    <property type="method" value="EM"/>
    <property type="resolution" value="2.50 A"/>
    <property type="chains" value="5=1-208"/>
</dbReference>
<dbReference type="PDB" id="8JDK">
    <property type="method" value="EM"/>
    <property type="resolution" value="2.26 A"/>
    <property type="chains" value="5=1-208"/>
</dbReference>
<dbReference type="PDB" id="8JDL">
    <property type="method" value="EM"/>
    <property type="resolution" value="2.42 A"/>
    <property type="chains" value="5=1-208"/>
</dbReference>
<dbReference type="PDB" id="8JDM">
    <property type="method" value="EM"/>
    <property type="resolution" value="2.67 A"/>
    <property type="chains" value="5=1-208"/>
</dbReference>
<dbReference type="PDB" id="8K2C">
    <property type="method" value="EM"/>
    <property type="resolution" value="2.40 A"/>
    <property type="chains" value="SI=1-208"/>
</dbReference>
<dbReference type="PDB" id="8OZ0">
    <property type="method" value="EM"/>
    <property type="resolution" value="3.50 A"/>
    <property type="chains" value="d=1-208"/>
</dbReference>
<dbReference type="PDB" id="8PJ1">
    <property type="method" value="EM"/>
    <property type="resolution" value="3.40 A"/>
    <property type="chains" value="R=1-208"/>
</dbReference>
<dbReference type="PDB" id="8PJ2">
    <property type="method" value="EM"/>
    <property type="resolution" value="3.40 A"/>
    <property type="chains" value="R=1-208"/>
</dbReference>
<dbReference type="PDB" id="8PJ3">
    <property type="method" value="EM"/>
    <property type="resolution" value="3.70 A"/>
    <property type="chains" value="R=1-208"/>
</dbReference>
<dbReference type="PDB" id="8PJ4">
    <property type="method" value="EM"/>
    <property type="resolution" value="3.20 A"/>
    <property type="chains" value="R=1-208"/>
</dbReference>
<dbReference type="PDB" id="8PJ5">
    <property type="method" value="EM"/>
    <property type="resolution" value="2.90 A"/>
    <property type="chains" value="R=1-208"/>
</dbReference>
<dbReference type="PDB" id="8PJ6">
    <property type="method" value="EM"/>
    <property type="resolution" value="2.90 A"/>
    <property type="chains" value="R=1-208"/>
</dbReference>
<dbReference type="PDB" id="8PPK">
    <property type="method" value="EM"/>
    <property type="resolution" value="2.98 A"/>
    <property type="chains" value="I=1-208"/>
</dbReference>
<dbReference type="PDB" id="8PPL">
    <property type="method" value="EM"/>
    <property type="resolution" value="2.65 A"/>
    <property type="chains" value="AI=1-208"/>
</dbReference>
<dbReference type="PDB" id="8QOI">
    <property type="method" value="EM"/>
    <property type="resolution" value="1.90 A"/>
    <property type="chains" value="SI=1-208"/>
</dbReference>
<dbReference type="PDB" id="8T4S">
    <property type="method" value="EM"/>
    <property type="resolution" value="2.60 A"/>
    <property type="chains" value="I=1-208"/>
</dbReference>
<dbReference type="PDB" id="8UKB">
    <property type="method" value="EM"/>
    <property type="resolution" value="3.05 A"/>
    <property type="chains" value="SI=2-207"/>
</dbReference>
<dbReference type="PDB" id="8XP2">
    <property type="method" value="EM"/>
    <property type="resolution" value="3.20 A"/>
    <property type="chains" value="SI=1-208"/>
</dbReference>
<dbReference type="PDB" id="8XP3">
    <property type="method" value="EM"/>
    <property type="resolution" value="3.40 A"/>
    <property type="chains" value="SI=1-208"/>
</dbReference>
<dbReference type="PDB" id="8XSX">
    <property type="method" value="EM"/>
    <property type="resolution" value="2.40 A"/>
    <property type="chains" value="SI=1-208"/>
</dbReference>
<dbReference type="PDB" id="8XSY">
    <property type="method" value="EM"/>
    <property type="resolution" value="3.00 A"/>
    <property type="chains" value="SI=1-208"/>
</dbReference>
<dbReference type="PDB" id="8XSZ">
    <property type="method" value="EM"/>
    <property type="resolution" value="3.20 A"/>
    <property type="chains" value="SI=1-208"/>
</dbReference>
<dbReference type="PDB" id="8XXL">
    <property type="method" value="EM"/>
    <property type="resolution" value="2.90 A"/>
    <property type="chains" value="SI=1-208"/>
</dbReference>
<dbReference type="PDB" id="8XXM">
    <property type="method" value="EM"/>
    <property type="resolution" value="3.20 A"/>
    <property type="chains" value="SI=1-208"/>
</dbReference>
<dbReference type="PDB" id="8XXN">
    <property type="method" value="EM"/>
    <property type="resolution" value="3.60 A"/>
    <property type="chains" value="SI=1-208"/>
</dbReference>
<dbReference type="PDB" id="8Y0W">
    <property type="method" value="EM"/>
    <property type="resolution" value="3.40 A"/>
    <property type="chains" value="SI=1-208"/>
</dbReference>
<dbReference type="PDB" id="8Y0X">
    <property type="method" value="EM"/>
    <property type="resolution" value="3.30 A"/>
    <property type="chains" value="SI=1-208"/>
</dbReference>
<dbReference type="PDB" id="8YOO">
    <property type="method" value="EM"/>
    <property type="resolution" value="2.00 A"/>
    <property type="chains" value="SI=1-208"/>
</dbReference>
<dbReference type="PDB" id="8YOP">
    <property type="method" value="EM"/>
    <property type="resolution" value="2.20 A"/>
    <property type="chains" value="SI=1-208"/>
</dbReference>
<dbReference type="PDB" id="8ZDB">
    <property type="method" value="EM"/>
    <property type="resolution" value="3.60 A"/>
    <property type="chains" value="I=1-208"/>
</dbReference>
<dbReference type="PDB" id="8ZDC">
    <property type="method" value="EM"/>
    <property type="resolution" value="3.80 A"/>
    <property type="chains" value="I=1-208"/>
</dbReference>
<dbReference type="PDB" id="8ZDD">
    <property type="method" value="EM"/>
    <property type="resolution" value="3.70 A"/>
    <property type="chains" value="I=1-208"/>
</dbReference>
<dbReference type="PDB" id="9BKD">
    <property type="method" value="EM"/>
    <property type="resolution" value="2.60 A"/>
    <property type="chains" value="R=1-208"/>
</dbReference>
<dbReference type="PDB" id="9BLN">
    <property type="method" value="EM"/>
    <property type="resolution" value="3.90 A"/>
    <property type="chains" value="R=1-208"/>
</dbReference>
<dbReference type="PDB" id="9C3H">
    <property type="method" value="EM"/>
    <property type="resolution" value="2.00 A"/>
    <property type="chains" value="SI=1-208"/>
</dbReference>
<dbReference type="PDB" id="9G8M">
    <property type="method" value="EM"/>
    <property type="resolution" value="3.30 A"/>
    <property type="chains" value="SI=1-208"/>
</dbReference>
<dbReference type="PDB" id="9G8O">
    <property type="method" value="EM"/>
    <property type="resolution" value="3.40 A"/>
    <property type="chains" value="SI=1-208"/>
</dbReference>
<dbReference type="PDBsum" id="4UG0"/>
<dbReference type="PDBsum" id="4V6X"/>
<dbReference type="PDBsum" id="5A2Q"/>
<dbReference type="PDBsum" id="5AJ0"/>
<dbReference type="PDBsum" id="5FLX"/>
<dbReference type="PDBsum" id="5LKS"/>
<dbReference type="PDBsum" id="5OA3"/>
<dbReference type="PDBsum" id="5T2C"/>
<dbReference type="PDBsum" id="5VYC"/>
<dbReference type="PDBsum" id="6FEC"/>
<dbReference type="PDBsum" id="6G18"/>
<dbReference type="PDBsum" id="6G4S"/>
<dbReference type="PDBsum" id="6G4W"/>
<dbReference type="PDBsum" id="6G51"/>
<dbReference type="PDBsum" id="6G53"/>
<dbReference type="PDBsum" id="6G5H"/>
<dbReference type="PDBsum" id="6G5I"/>
<dbReference type="PDBsum" id="6IP5"/>
<dbReference type="PDBsum" id="6IP6"/>
<dbReference type="PDBsum" id="6IP8"/>
<dbReference type="PDBsum" id="6OLE"/>
<dbReference type="PDBsum" id="6OLF"/>
<dbReference type="PDBsum" id="6OLG"/>
<dbReference type="PDBsum" id="6OLI"/>
<dbReference type="PDBsum" id="6OLZ"/>
<dbReference type="PDBsum" id="6OM0"/>
<dbReference type="PDBsum" id="6OM7"/>
<dbReference type="PDBsum" id="6QZP"/>
<dbReference type="PDBsum" id="6XA1"/>
<dbReference type="PDBsum" id="6Y0G"/>
<dbReference type="PDBsum" id="6Y2L"/>
<dbReference type="PDBsum" id="6Y57"/>
<dbReference type="PDBsum" id="6YBW"/>
<dbReference type="PDBsum" id="6Z6L"/>
<dbReference type="PDBsum" id="6Z6M"/>
<dbReference type="PDBsum" id="6Z6N"/>
<dbReference type="PDBsum" id="6ZLW"/>
<dbReference type="PDBsum" id="6ZM7"/>
<dbReference type="PDBsum" id="6ZME"/>
<dbReference type="PDBsum" id="6ZMI"/>
<dbReference type="PDBsum" id="6ZMO"/>
<dbReference type="PDBsum" id="6ZMT"/>
<dbReference type="PDBsum" id="6ZMW"/>
<dbReference type="PDBsum" id="6ZN5"/>
<dbReference type="PDBsum" id="6ZOJ"/>
<dbReference type="PDBsum" id="6ZOK"/>
<dbReference type="PDBsum" id="6ZON"/>
<dbReference type="PDBsum" id="6ZP4"/>
<dbReference type="PDBsum" id="6ZUO"/>
<dbReference type="PDBsum" id="6ZV6"/>
<dbReference type="PDBsum" id="6ZVH"/>
<dbReference type="PDBsum" id="6ZVJ"/>
<dbReference type="PDBsum" id="6ZXD"/>
<dbReference type="PDBsum" id="6ZXE"/>
<dbReference type="PDBsum" id="6ZXF"/>
<dbReference type="PDBsum" id="6ZXG"/>
<dbReference type="PDBsum" id="6ZXH"/>
<dbReference type="PDBsum" id="7A09"/>
<dbReference type="PDBsum" id="7K5I"/>
<dbReference type="PDBsum" id="7MQ8"/>
<dbReference type="PDBsum" id="7MQ9"/>
<dbReference type="PDBsum" id="7MQA"/>
<dbReference type="PDBsum" id="7QP6"/>
<dbReference type="PDBsum" id="7QP7"/>
<dbReference type="PDBsum" id="7QVP"/>
<dbReference type="PDBsum" id="7R4X"/>
<dbReference type="PDBsum" id="7TQL"/>
<dbReference type="PDBsum" id="7WTS"/>
<dbReference type="PDBsum" id="7WTT"/>
<dbReference type="PDBsum" id="7WTU"/>
<dbReference type="PDBsum" id="7WTV"/>
<dbReference type="PDBsum" id="7WTW"/>
<dbReference type="PDBsum" id="7WTX"/>
<dbReference type="PDBsum" id="7WTZ"/>
<dbReference type="PDBsum" id="7WU0"/>
<dbReference type="PDBsum" id="7XNX"/>
<dbReference type="PDBsum" id="7XNY"/>
<dbReference type="PDBsum" id="8G5Y"/>
<dbReference type="PDBsum" id="8G5Z"/>
<dbReference type="PDBsum" id="8G60"/>
<dbReference type="PDBsum" id="8G61"/>
<dbReference type="PDBsum" id="8G6J"/>
<dbReference type="PDBsum" id="8GLP"/>
<dbReference type="PDBsum" id="8IFD"/>
<dbReference type="PDBsum" id="8IFE"/>
<dbReference type="PDBsum" id="8JDJ"/>
<dbReference type="PDBsum" id="8JDK"/>
<dbReference type="PDBsum" id="8JDL"/>
<dbReference type="PDBsum" id="8JDM"/>
<dbReference type="PDBsum" id="8K2C"/>
<dbReference type="PDBsum" id="8OZ0"/>
<dbReference type="PDBsum" id="8PJ1"/>
<dbReference type="PDBsum" id="8PJ2"/>
<dbReference type="PDBsum" id="8PJ3"/>
<dbReference type="PDBsum" id="8PJ4"/>
<dbReference type="PDBsum" id="8PJ5"/>
<dbReference type="PDBsum" id="8PJ6"/>
<dbReference type="PDBsum" id="8PPK"/>
<dbReference type="PDBsum" id="8PPL"/>
<dbReference type="PDBsum" id="8QOI"/>
<dbReference type="PDBsum" id="8T4S"/>
<dbReference type="PDBsum" id="8UKB"/>
<dbReference type="PDBsum" id="8XP2"/>
<dbReference type="PDBsum" id="8XP3"/>
<dbReference type="PDBsum" id="8XSX"/>
<dbReference type="PDBsum" id="8XSY"/>
<dbReference type="PDBsum" id="8XSZ"/>
<dbReference type="PDBsum" id="8XXL"/>
<dbReference type="PDBsum" id="8XXM"/>
<dbReference type="PDBsum" id="8XXN"/>
<dbReference type="PDBsum" id="8Y0W"/>
<dbReference type="PDBsum" id="8Y0X"/>
<dbReference type="PDBsum" id="8YOO"/>
<dbReference type="PDBsum" id="8YOP"/>
<dbReference type="PDBsum" id="8ZDB"/>
<dbReference type="PDBsum" id="8ZDC"/>
<dbReference type="PDBsum" id="8ZDD"/>
<dbReference type="PDBsum" id="9BKD"/>
<dbReference type="PDBsum" id="9BLN"/>
<dbReference type="PDBsum" id="9C3H"/>
<dbReference type="PDBsum" id="9G8M"/>
<dbReference type="PDBsum" id="9G8O"/>
<dbReference type="EMDB" id="EMD-10668"/>
<dbReference type="EMDB" id="EMD-10674"/>
<dbReference type="EMDB" id="EMD-10690"/>
<dbReference type="EMDB" id="EMD-10775"/>
<dbReference type="EMDB" id="EMD-11098"/>
<dbReference type="EMDB" id="EMD-11099"/>
<dbReference type="EMDB" id="EMD-11100"/>
<dbReference type="EMDB" id="EMD-11276"/>
<dbReference type="EMDB" id="EMD-11288"/>
<dbReference type="EMDB" id="EMD-11289"/>
<dbReference type="EMDB" id="EMD-11292"/>
<dbReference type="EMDB" id="EMD-11299"/>
<dbReference type="EMDB" id="EMD-11301"/>
<dbReference type="EMDB" id="EMD-11302"/>
<dbReference type="EMDB" id="EMD-11310"/>
<dbReference type="EMDB" id="EMD-11320"/>
<dbReference type="EMDB" id="EMD-11321"/>
<dbReference type="EMDB" id="EMD-11325"/>
<dbReference type="EMDB" id="EMD-11335"/>
<dbReference type="EMDB" id="EMD-11440"/>
<dbReference type="EMDB" id="EMD-11441"/>
<dbReference type="EMDB" id="EMD-11456"/>
<dbReference type="EMDB" id="EMD-11458"/>
<dbReference type="EMDB" id="EMD-11517"/>
<dbReference type="EMDB" id="EMD-11518"/>
<dbReference type="EMDB" id="EMD-11519"/>
<dbReference type="EMDB" id="EMD-11520"/>
<dbReference type="EMDB" id="EMD-11521"/>
<dbReference type="EMDB" id="EMD-11602"/>
<dbReference type="EMDB" id="EMD-14113"/>
<dbReference type="EMDB" id="EMD-14114"/>
<dbReference type="EMDB" id="EMD-14181"/>
<dbReference type="EMDB" id="EMD-14317"/>
<dbReference type="EMDB" id="EMD-17297"/>
<dbReference type="EMDB" id="EMD-17696"/>
<dbReference type="EMDB" id="EMD-17697"/>
<dbReference type="EMDB" id="EMD-17698"/>
<dbReference type="EMDB" id="EMD-17699"/>
<dbReference type="EMDB" id="EMD-17700"/>
<dbReference type="EMDB" id="EMD-17701"/>
<dbReference type="EMDB" id="EMD-17804"/>
<dbReference type="EMDB" id="EMD-17805"/>
<dbReference type="EMDB" id="EMD-18539"/>
<dbReference type="EMDB" id="EMD-22681"/>
<dbReference type="EMDB" id="EMD-23936"/>
<dbReference type="EMDB" id="EMD-23937"/>
<dbReference type="EMDB" id="EMD-23938"/>
<dbReference type="EMDB" id="EMD-26067"/>
<dbReference type="EMDB" id="EMD-29757"/>
<dbReference type="EMDB" id="EMD-29758"/>
<dbReference type="EMDB" id="EMD-29759"/>
<dbReference type="EMDB" id="EMD-29760"/>
<dbReference type="EMDB" id="EMD-29771"/>
<dbReference type="EMDB" id="EMD-32799"/>
<dbReference type="EMDB" id="EMD-32800"/>
<dbReference type="EMDB" id="EMD-32801"/>
<dbReference type="EMDB" id="EMD-32802"/>
<dbReference type="EMDB" id="EMD-32803"/>
<dbReference type="EMDB" id="EMD-32804"/>
<dbReference type="EMDB" id="EMD-32806"/>
<dbReference type="EMDB" id="EMD-32807"/>
<dbReference type="EMDB" id="EMD-33329"/>
<dbReference type="EMDB" id="EMD-33330"/>
<dbReference type="EMDB" id="EMD-35413"/>
<dbReference type="EMDB" id="EMD-35414"/>
<dbReference type="EMDB" id="EMD-36178"/>
<dbReference type="EMDB" id="EMD-36179"/>
<dbReference type="EMDB" id="EMD-36180"/>
<dbReference type="EMDB" id="EMD-36181"/>
<dbReference type="EMDB" id="EMD-36838"/>
<dbReference type="EMDB" id="EMD-3770"/>
<dbReference type="EMDB" id="EMD-38548"/>
<dbReference type="EMDB" id="EMD-38549"/>
<dbReference type="EMDB" id="EMD-38629"/>
<dbReference type="EMDB" id="EMD-38630"/>
<dbReference type="EMDB" id="EMD-38631"/>
<dbReference type="EMDB" id="EMD-38752"/>
<dbReference type="EMDB" id="EMD-38753"/>
<dbReference type="EMDB" id="EMD-38754"/>
<dbReference type="EMDB" id="EMD-3883"/>
<dbReference type="EMDB" id="EMD-39455"/>
<dbReference type="EMDB" id="EMD-39456"/>
<dbReference type="EMDB" id="EMD-39956"/>
<dbReference type="EMDB" id="EMD-39957"/>
<dbReference type="EMDB" id="EMD-39958"/>
<dbReference type="EMDB" id="EMD-40205"/>
<dbReference type="EMDB" id="EMD-4070"/>
<dbReference type="EMDB" id="EMD-41039"/>
<dbReference type="EMDB" id="EMD-42351"/>
<dbReference type="EMDB" id="EMD-4242"/>
<dbReference type="EMDB" id="EMD-4337"/>
<dbReference type="EMDB" id="EMD-4348"/>
<dbReference type="EMDB" id="EMD-4349"/>
<dbReference type="EMDB" id="EMD-4350"/>
<dbReference type="EMDB" id="EMD-4351"/>
<dbReference type="EMDB" id="EMD-4352"/>
<dbReference type="EMDB" id="EMD-4353"/>
<dbReference type="EMDB" id="EMD-44641"/>
<dbReference type="EMDB" id="EMD-44671"/>
<dbReference type="EMDB" id="EMD-45170"/>
<dbReference type="EMDB" id="EMD-51132"/>
<dbReference type="EMDB" id="EMD-51134"/>
<dbReference type="EMDB" id="EMD-9701"/>
<dbReference type="EMDB" id="EMD-9702"/>
<dbReference type="EMDB" id="EMD-9703"/>
<dbReference type="SMR" id="P62241"/>
<dbReference type="BioGRID" id="112116">
    <property type="interactions" value="674"/>
</dbReference>
<dbReference type="ComplexPortal" id="CPX-5223">
    <property type="entry name" value="40S cytosolic small ribosomal subunit"/>
</dbReference>
<dbReference type="CORUM" id="P62241"/>
<dbReference type="FunCoup" id="P62241">
    <property type="interactions" value="2358"/>
</dbReference>
<dbReference type="IntAct" id="P62241">
    <property type="interactions" value="374"/>
</dbReference>
<dbReference type="MINT" id="P62241"/>
<dbReference type="STRING" id="9606.ENSP00000379888"/>
<dbReference type="DrugBank" id="DB11638">
    <property type="generic name" value="Artenimol"/>
</dbReference>
<dbReference type="GlyGen" id="P62241">
    <property type="glycosylation" value="1 site, 1 O-linked glycan (1 site)"/>
</dbReference>
<dbReference type="iPTMnet" id="P62241"/>
<dbReference type="PhosphoSitePlus" id="P62241"/>
<dbReference type="SwissPalm" id="P62241"/>
<dbReference type="BioMuta" id="RPS8"/>
<dbReference type="DMDM" id="50403622"/>
<dbReference type="CPTAC" id="CPTAC-581"/>
<dbReference type="jPOST" id="P62241"/>
<dbReference type="MassIVE" id="P62241"/>
<dbReference type="PaxDb" id="9606-ENSP00000379888"/>
<dbReference type="PeptideAtlas" id="P62241"/>
<dbReference type="ProteomicsDB" id="57372"/>
<dbReference type="Pumba" id="P62241"/>
<dbReference type="TopDownProteomics" id="P62241"/>
<dbReference type="Antibodypedia" id="32545">
    <property type="antibodies" value="172 antibodies from 26 providers"/>
</dbReference>
<dbReference type="DNASU" id="6202"/>
<dbReference type="Ensembl" id="ENST00000396651.8">
    <property type="protein sequence ID" value="ENSP00000379888.3"/>
    <property type="gene ID" value="ENSG00000142937.12"/>
</dbReference>
<dbReference type="GeneID" id="6202"/>
<dbReference type="KEGG" id="hsa:6202"/>
<dbReference type="MANE-Select" id="ENST00000396651.8">
    <property type="protein sequence ID" value="ENSP00000379888.3"/>
    <property type="RefSeq nucleotide sequence ID" value="NM_001012.2"/>
    <property type="RefSeq protein sequence ID" value="NP_001003.1"/>
</dbReference>
<dbReference type="AGR" id="HGNC:10441"/>
<dbReference type="CTD" id="6202"/>
<dbReference type="DisGeNET" id="6202"/>
<dbReference type="GeneCards" id="RPS8"/>
<dbReference type="HGNC" id="HGNC:10441">
    <property type="gene designation" value="RPS8"/>
</dbReference>
<dbReference type="HPA" id="ENSG00000142937">
    <property type="expression patterns" value="Low tissue specificity"/>
</dbReference>
<dbReference type="MIM" id="600357">
    <property type="type" value="gene"/>
</dbReference>
<dbReference type="neXtProt" id="NX_P62241"/>
<dbReference type="OpenTargets" id="ENSG00000142937"/>
<dbReference type="PharmGKB" id="PA34856"/>
<dbReference type="VEuPathDB" id="HostDB:ENSG00000142937"/>
<dbReference type="eggNOG" id="KOG3283">
    <property type="taxonomic scope" value="Eukaryota"/>
</dbReference>
<dbReference type="GeneTree" id="ENSGT00390000012433"/>
<dbReference type="HOGENOM" id="CLU_080597_1_1_1"/>
<dbReference type="InParanoid" id="P62241"/>
<dbReference type="OMA" id="QRPHYRK"/>
<dbReference type="OrthoDB" id="1703270at2759"/>
<dbReference type="PAN-GO" id="P62241">
    <property type="GO annotations" value="3 GO annotations based on evolutionary models"/>
</dbReference>
<dbReference type="PhylomeDB" id="P62241"/>
<dbReference type="TreeFam" id="TF300041"/>
<dbReference type="PathwayCommons" id="P62241"/>
<dbReference type="Reactome" id="R-HSA-156827">
    <property type="pathway name" value="L13a-mediated translational silencing of Ceruloplasmin expression"/>
</dbReference>
<dbReference type="Reactome" id="R-HSA-156902">
    <property type="pathway name" value="Peptide chain elongation"/>
</dbReference>
<dbReference type="Reactome" id="R-HSA-1799339">
    <property type="pathway name" value="SRP-dependent cotranslational protein targeting to membrane"/>
</dbReference>
<dbReference type="Reactome" id="R-HSA-192823">
    <property type="pathway name" value="Viral mRNA Translation"/>
</dbReference>
<dbReference type="Reactome" id="R-HSA-2408557">
    <property type="pathway name" value="Selenocysteine synthesis"/>
</dbReference>
<dbReference type="Reactome" id="R-HSA-6791226">
    <property type="pathway name" value="Major pathway of rRNA processing in the nucleolus and cytosol"/>
</dbReference>
<dbReference type="Reactome" id="R-HSA-72649">
    <property type="pathway name" value="Translation initiation complex formation"/>
</dbReference>
<dbReference type="Reactome" id="R-HSA-72689">
    <property type="pathway name" value="Formation of a pool of free 40S subunits"/>
</dbReference>
<dbReference type="Reactome" id="R-HSA-72695">
    <property type="pathway name" value="Formation of the ternary complex, and subsequently, the 43S complex"/>
</dbReference>
<dbReference type="Reactome" id="R-HSA-72702">
    <property type="pathway name" value="Ribosomal scanning and start codon recognition"/>
</dbReference>
<dbReference type="Reactome" id="R-HSA-72706">
    <property type="pathway name" value="GTP hydrolysis and joining of the 60S ribosomal subunit"/>
</dbReference>
<dbReference type="Reactome" id="R-HSA-72764">
    <property type="pathway name" value="Eukaryotic Translation Termination"/>
</dbReference>
<dbReference type="Reactome" id="R-HSA-9010553">
    <property type="pathway name" value="Regulation of expression of SLITs and ROBOs"/>
</dbReference>
<dbReference type="Reactome" id="R-HSA-9633012">
    <property type="pathway name" value="Response of EIF2AK4 (GCN2) to amino acid deficiency"/>
</dbReference>
<dbReference type="Reactome" id="R-HSA-9735869">
    <property type="pathway name" value="SARS-CoV-1 modulates host translation machinery"/>
</dbReference>
<dbReference type="Reactome" id="R-HSA-9754678">
    <property type="pathway name" value="SARS-CoV-2 modulates host translation machinery"/>
</dbReference>
<dbReference type="Reactome" id="R-HSA-975956">
    <property type="pathway name" value="Nonsense Mediated Decay (NMD) independent of the Exon Junction Complex (EJC)"/>
</dbReference>
<dbReference type="Reactome" id="R-HSA-975957">
    <property type="pathway name" value="Nonsense Mediated Decay (NMD) enhanced by the Exon Junction Complex (EJC)"/>
</dbReference>
<dbReference type="SignaLink" id="P62241"/>
<dbReference type="SIGNOR" id="P62241"/>
<dbReference type="BioGRID-ORCS" id="6202">
    <property type="hits" value="840 hits in 1143 CRISPR screens"/>
</dbReference>
<dbReference type="CD-CODE" id="232F8A39">
    <property type="entry name" value="P-body"/>
</dbReference>
<dbReference type="CD-CODE" id="91857CE7">
    <property type="entry name" value="Nucleolus"/>
</dbReference>
<dbReference type="CD-CODE" id="F85A2E29">
    <property type="entry name" value="IMP1 RNP granule"/>
</dbReference>
<dbReference type="ChiTaRS" id="RPS8">
    <property type="organism name" value="human"/>
</dbReference>
<dbReference type="EvolutionaryTrace" id="P62241"/>
<dbReference type="GeneWiki" id="RPS8"/>
<dbReference type="GenomeRNAi" id="6202"/>
<dbReference type="Pharos" id="P62241">
    <property type="development level" value="Tbio"/>
</dbReference>
<dbReference type="PRO" id="PR:P62241"/>
<dbReference type="Proteomes" id="UP000005640">
    <property type="component" value="Chromosome 1"/>
</dbReference>
<dbReference type="RNAct" id="P62241">
    <property type="molecule type" value="protein"/>
</dbReference>
<dbReference type="Bgee" id="ENSG00000142937">
    <property type="expression patterns" value="Expressed in left ovary and 101 other cell types or tissues"/>
</dbReference>
<dbReference type="ExpressionAtlas" id="P62241">
    <property type="expression patterns" value="baseline and differential"/>
</dbReference>
<dbReference type="GO" id="GO:0005737">
    <property type="term" value="C:cytoplasm"/>
    <property type="evidence" value="ECO:0000303"/>
    <property type="project" value="ComplexPortal"/>
</dbReference>
<dbReference type="GO" id="GO:0005829">
    <property type="term" value="C:cytosol"/>
    <property type="evidence" value="ECO:0000314"/>
    <property type="project" value="HPA"/>
</dbReference>
<dbReference type="GO" id="GO:0022626">
    <property type="term" value="C:cytosolic ribosome"/>
    <property type="evidence" value="ECO:0000314"/>
    <property type="project" value="FlyBase"/>
</dbReference>
<dbReference type="GO" id="GO:0022627">
    <property type="term" value="C:cytosolic small ribosomal subunit"/>
    <property type="evidence" value="ECO:0000314"/>
    <property type="project" value="UniProtKB"/>
</dbReference>
<dbReference type="GO" id="GO:0005783">
    <property type="term" value="C:endoplasmic reticulum"/>
    <property type="evidence" value="ECO:0000314"/>
    <property type="project" value="HPA"/>
</dbReference>
<dbReference type="GO" id="GO:0070062">
    <property type="term" value="C:extracellular exosome"/>
    <property type="evidence" value="ECO:0007005"/>
    <property type="project" value="UniProtKB"/>
</dbReference>
<dbReference type="GO" id="GO:0005925">
    <property type="term" value="C:focal adhesion"/>
    <property type="evidence" value="ECO:0007005"/>
    <property type="project" value="UniProtKB"/>
</dbReference>
<dbReference type="GO" id="GO:0016020">
    <property type="term" value="C:membrane"/>
    <property type="evidence" value="ECO:0007005"/>
    <property type="project" value="UniProtKB"/>
</dbReference>
<dbReference type="GO" id="GO:0005730">
    <property type="term" value="C:nucleolus"/>
    <property type="evidence" value="ECO:0007669"/>
    <property type="project" value="UniProtKB-SubCell"/>
</dbReference>
<dbReference type="GO" id="GO:0005654">
    <property type="term" value="C:nucleoplasm"/>
    <property type="evidence" value="ECO:0000304"/>
    <property type="project" value="Reactome"/>
</dbReference>
<dbReference type="GO" id="GO:0005634">
    <property type="term" value="C:nucleus"/>
    <property type="evidence" value="ECO:0007005"/>
    <property type="project" value="UniProtKB"/>
</dbReference>
<dbReference type="GO" id="GO:1990904">
    <property type="term" value="C:ribonucleoprotein complex"/>
    <property type="evidence" value="ECO:0000314"/>
    <property type="project" value="UniProtKB"/>
</dbReference>
<dbReference type="GO" id="GO:0032040">
    <property type="term" value="C:small-subunit processome"/>
    <property type="evidence" value="ECO:0000314"/>
    <property type="project" value="UniProtKB"/>
</dbReference>
<dbReference type="GO" id="GO:0003723">
    <property type="term" value="F:RNA binding"/>
    <property type="evidence" value="ECO:0007005"/>
    <property type="project" value="UniProtKB"/>
</dbReference>
<dbReference type="GO" id="GO:0003735">
    <property type="term" value="F:structural constituent of ribosome"/>
    <property type="evidence" value="ECO:0000314"/>
    <property type="project" value="FlyBase"/>
</dbReference>
<dbReference type="GO" id="GO:0002181">
    <property type="term" value="P:cytoplasmic translation"/>
    <property type="evidence" value="ECO:0000303"/>
    <property type="project" value="ComplexPortal"/>
</dbReference>
<dbReference type="GO" id="GO:0000462">
    <property type="term" value="P:maturation of SSU-rRNA from tricistronic rRNA transcript (SSU-rRNA, 5.8S rRNA, LSU-rRNA)"/>
    <property type="evidence" value="ECO:0000318"/>
    <property type="project" value="GO_Central"/>
</dbReference>
<dbReference type="GO" id="GO:0042274">
    <property type="term" value="P:ribosomal small subunit biogenesis"/>
    <property type="evidence" value="ECO:0000314"/>
    <property type="project" value="UniProtKB"/>
</dbReference>
<dbReference type="GO" id="GO:0006412">
    <property type="term" value="P:translation"/>
    <property type="evidence" value="ECO:0000303"/>
    <property type="project" value="UniProtKB"/>
</dbReference>
<dbReference type="CDD" id="cd11380">
    <property type="entry name" value="Ribosomal_S8e_like"/>
    <property type="match status" value="1"/>
</dbReference>
<dbReference type="FunFam" id="1.10.168.20:FF:000001">
    <property type="entry name" value="40S ribosomal protein S8"/>
    <property type="match status" value="1"/>
</dbReference>
<dbReference type="FunFam" id="3.10.290.70:FF:000004">
    <property type="entry name" value="40S ribosomal protein S8"/>
    <property type="match status" value="1"/>
</dbReference>
<dbReference type="FunFam" id="3.10.290.70:FF:000005">
    <property type="entry name" value="40S ribosomal protein S8"/>
    <property type="match status" value="1"/>
</dbReference>
<dbReference type="Gene3D" id="3.10.290.70">
    <property type="match status" value="1"/>
</dbReference>
<dbReference type="Gene3D" id="1.10.168.20">
    <property type="entry name" value="Ribosomal protein S8e, subdomain"/>
    <property type="match status" value="1"/>
</dbReference>
<dbReference type="InterPro" id="IPR001047">
    <property type="entry name" value="Ribosomal_eS8"/>
</dbReference>
<dbReference type="InterPro" id="IPR018283">
    <property type="entry name" value="Ribosomal_eS8_CS"/>
</dbReference>
<dbReference type="InterPro" id="IPR042563">
    <property type="entry name" value="Ribosomal_protein_eS8_euk"/>
</dbReference>
<dbReference type="InterPro" id="IPR022309">
    <property type="entry name" value="Ribosomal_Se8/biogenesis_NSA2"/>
</dbReference>
<dbReference type="NCBIfam" id="TIGR00307">
    <property type="entry name" value="eS8"/>
    <property type="match status" value="1"/>
</dbReference>
<dbReference type="PANTHER" id="PTHR10394">
    <property type="entry name" value="40S RIBOSOMAL PROTEIN S8"/>
    <property type="match status" value="1"/>
</dbReference>
<dbReference type="Pfam" id="PF01201">
    <property type="entry name" value="Ribosomal_S8e"/>
    <property type="match status" value="1"/>
</dbReference>
<dbReference type="PROSITE" id="PS01193">
    <property type="entry name" value="RIBOSOMAL_S8E"/>
    <property type="match status" value="1"/>
</dbReference>
<gene>
    <name evidence="11" type="primary">RPS8</name>
    <name type="ORF">OK/SW-cl.83</name>
</gene>
<protein>
    <recommendedName>
        <fullName evidence="8">Small ribosomal subunit protein eS8</fullName>
    </recommendedName>
    <alternativeName>
        <fullName>40S ribosomal protein S8</fullName>
    </alternativeName>
</protein>
<proteinExistence type="evidence at protein level"/>
<organism>
    <name type="scientific">Homo sapiens</name>
    <name type="common">Human</name>
    <dbReference type="NCBI Taxonomy" id="9606"/>
    <lineage>
        <taxon>Eukaryota</taxon>
        <taxon>Metazoa</taxon>
        <taxon>Chordata</taxon>
        <taxon>Craniata</taxon>
        <taxon>Vertebrata</taxon>
        <taxon>Euteleostomi</taxon>
        <taxon>Mammalia</taxon>
        <taxon>Eutheria</taxon>
        <taxon>Euarchontoglires</taxon>
        <taxon>Primates</taxon>
        <taxon>Haplorrhini</taxon>
        <taxon>Catarrhini</taxon>
        <taxon>Hominidae</taxon>
        <taxon>Homo</taxon>
    </lineage>
</organism>